<feature type="initiator methionine" description="Removed" evidence="15">
    <location>
        <position position="1"/>
    </location>
</feature>
<feature type="chain" id="PRO_0000087560" description="Glycerol-1-phosphate phosphohydrolase 1">
    <location>
        <begin position="2"/>
        <end position="250"/>
    </location>
</feature>
<feature type="active site" description="Nucleophile" evidence="1">
    <location>
        <position position="18"/>
    </location>
</feature>
<feature type="active site" description="Proton donor" evidence="1">
    <location>
        <position position="20"/>
    </location>
</feature>
<feature type="binding site" evidence="1">
    <location>
        <position position="18"/>
    </location>
    <ligand>
        <name>Mg(2+)</name>
        <dbReference type="ChEBI" id="CHEBI:18420"/>
    </ligand>
</feature>
<feature type="binding site" evidence="1">
    <location>
        <position position="20"/>
    </location>
    <ligand>
        <name>Mg(2+)</name>
        <dbReference type="ChEBI" id="CHEBI:18420"/>
    </ligand>
</feature>
<feature type="binding site" evidence="1">
    <location>
        <position position="179"/>
    </location>
    <ligand>
        <name>Mg(2+)</name>
        <dbReference type="ChEBI" id="CHEBI:18420"/>
    </ligand>
</feature>
<feature type="modified residue" description="Phosphoserine" evidence="21">
    <location>
        <position position="90"/>
    </location>
</feature>
<feature type="cross-link" description="Glycyl lysine isopeptide (Lys-Gly) (interchain with G-Cter in SUMO); alternate" evidence="9">
    <location>
        <position position="64"/>
    </location>
</feature>
<feature type="cross-link" description="Glycyl lysine isopeptide (Lys-Gly) (interchain with G-Cter in ubiquitin); alternate" evidence="22">
    <location>
        <position position="64"/>
    </location>
</feature>
<feature type="cross-link" description="Glycyl lysine isopeptide (Lys-Gly) (interchain with G-Cter in ubiquitin)" evidence="22">
    <location>
        <position position="144"/>
    </location>
</feature>
<feature type="sequence conflict" description="In Ref. 4; AA sequence." evidence="18" ref="4">
    <original>I</original>
    <variation>IK</variation>
    <location>
        <position position="91"/>
    </location>
</feature>
<feature type="strand" evidence="23">
    <location>
        <begin position="6"/>
        <end position="17"/>
    </location>
</feature>
<feature type="turn" evidence="23">
    <location>
        <begin position="21"/>
        <end position="23"/>
    </location>
</feature>
<feature type="helix" evidence="23">
    <location>
        <begin position="27"/>
        <end position="38"/>
    </location>
</feature>
<feature type="helix" evidence="23">
    <location>
        <begin position="46"/>
        <end position="52"/>
    </location>
</feature>
<feature type="helix" evidence="23">
    <location>
        <begin position="58"/>
        <end position="65"/>
    </location>
</feature>
<feature type="helix" evidence="23">
    <location>
        <begin position="67"/>
        <end position="69"/>
    </location>
</feature>
<feature type="helix" evidence="23">
    <location>
        <begin position="72"/>
        <end position="80"/>
    </location>
</feature>
<feature type="helix" evidence="23">
    <location>
        <begin position="82"/>
        <end position="86"/>
    </location>
</feature>
<feature type="helix" evidence="23">
    <location>
        <begin position="96"/>
        <end position="104"/>
    </location>
</feature>
<feature type="helix" evidence="23">
    <location>
        <begin position="108"/>
        <end position="110"/>
    </location>
</feature>
<feature type="strand" evidence="23">
    <location>
        <begin position="111"/>
        <end position="114"/>
    </location>
</feature>
<feature type="helix" evidence="23">
    <location>
        <begin position="119"/>
        <end position="129"/>
    </location>
</feature>
<feature type="strand" evidence="23">
    <location>
        <begin position="135"/>
        <end position="138"/>
    </location>
</feature>
<feature type="helix" evidence="23">
    <location>
        <begin position="140"/>
        <end position="142"/>
    </location>
</feature>
<feature type="helix" evidence="23">
    <location>
        <begin position="151"/>
        <end position="159"/>
    </location>
</feature>
<feature type="helix" evidence="23">
    <location>
        <begin position="169"/>
        <end position="171"/>
    </location>
</feature>
<feature type="strand" evidence="23">
    <location>
        <begin position="174"/>
        <end position="180"/>
    </location>
</feature>
<feature type="helix" evidence="23">
    <location>
        <begin position="181"/>
        <end position="189"/>
    </location>
</feature>
<feature type="strand" evidence="23">
    <location>
        <begin position="193"/>
        <end position="201"/>
    </location>
</feature>
<feature type="helix" evidence="23">
    <location>
        <begin position="203"/>
        <end position="206"/>
    </location>
</feature>
<feature type="strand" evidence="23">
    <location>
        <begin position="212"/>
        <end position="217"/>
    </location>
</feature>
<feature type="helix" evidence="23">
    <location>
        <begin position="218"/>
        <end position="220"/>
    </location>
</feature>
<feature type="strand" evidence="23">
    <location>
        <begin position="221"/>
        <end position="223"/>
    </location>
</feature>
<feature type="turn" evidence="23">
    <location>
        <begin position="228"/>
        <end position="231"/>
    </location>
</feature>
<feature type="strand" evidence="23">
    <location>
        <begin position="232"/>
        <end position="238"/>
    </location>
</feature>
<feature type="strand" evidence="23">
    <location>
        <begin position="241"/>
        <end position="243"/>
    </location>
</feature>
<feature type="turn" evidence="23">
    <location>
        <begin position="245"/>
        <end position="248"/>
    </location>
</feature>
<dbReference type="EC" id="3.1.3.21" evidence="14"/>
<dbReference type="EMBL" id="D50471">
    <property type="protein sequence ID" value="BAA09060.1"/>
    <property type="molecule type" value="mRNA"/>
</dbReference>
<dbReference type="EMBL" id="Z38060">
    <property type="protein sequence ID" value="CAA86169.1"/>
    <property type="status" value="ALT_INIT"/>
    <property type="molecule type" value="Genomic_DNA"/>
</dbReference>
<dbReference type="EMBL" id="BK006942">
    <property type="protein sequence ID" value="DAA08494.1"/>
    <property type="molecule type" value="Genomic_DNA"/>
</dbReference>
<dbReference type="PIR" id="S48426">
    <property type="entry name" value="S48426"/>
</dbReference>
<dbReference type="RefSeq" id="NP_012211.2">
    <property type="nucleotide sequence ID" value="NM_001179403.1"/>
</dbReference>
<dbReference type="PDB" id="2QLT">
    <property type="method" value="X-ray"/>
    <property type="resolution" value="1.60 A"/>
    <property type="chains" value="A=1-250"/>
</dbReference>
<dbReference type="PDBsum" id="2QLT"/>
<dbReference type="SMR" id="P41277"/>
<dbReference type="BioGRID" id="34937">
    <property type="interactions" value="208"/>
</dbReference>
<dbReference type="DIP" id="DIP-4713N"/>
<dbReference type="FunCoup" id="P41277">
    <property type="interactions" value="463"/>
</dbReference>
<dbReference type="IntAct" id="P41277">
    <property type="interactions" value="35"/>
</dbReference>
<dbReference type="MINT" id="P41277"/>
<dbReference type="STRING" id="4932.YIL053W"/>
<dbReference type="iPTMnet" id="P41277"/>
<dbReference type="PaxDb" id="4932-YIL053W"/>
<dbReference type="PeptideAtlas" id="P41277"/>
<dbReference type="TopDownProteomics" id="P41277"/>
<dbReference type="EnsemblFungi" id="YIL053W_mRNA">
    <property type="protein sequence ID" value="YIL053W"/>
    <property type="gene ID" value="YIL053W"/>
</dbReference>
<dbReference type="GeneID" id="854758"/>
<dbReference type="KEGG" id="sce:YIL053W"/>
<dbReference type="AGR" id="SGD:S000001315"/>
<dbReference type="SGD" id="S000001315">
    <property type="gene designation" value="GPP1"/>
</dbReference>
<dbReference type="VEuPathDB" id="FungiDB:YIL053W"/>
<dbReference type="eggNOG" id="KOG2914">
    <property type="taxonomic scope" value="Eukaryota"/>
</dbReference>
<dbReference type="GeneTree" id="ENSGT00940000176698"/>
<dbReference type="HOGENOM" id="CLU_045011_13_4_1"/>
<dbReference type="InParanoid" id="P41277"/>
<dbReference type="OMA" id="QVHTFDG"/>
<dbReference type="OrthoDB" id="40579at2759"/>
<dbReference type="BioCyc" id="MetaCyc:YIL053W-MONOMER"/>
<dbReference type="BioCyc" id="YEAST:YIL053W-MONOMER"/>
<dbReference type="BRENDA" id="3.1.3.21">
    <property type="organism ID" value="984"/>
</dbReference>
<dbReference type="BioGRID-ORCS" id="854758">
    <property type="hits" value="2 hits in 10 CRISPR screens"/>
</dbReference>
<dbReference type="CD-CODE" id="E03F929F">
    <property type="entry name" value="Stress granule"/>
</dbReference>
<dbReference type="EvolutionaryTrace" id="P41277"/>
<dbReference type="PRO" id="PR:P41277"/>
<dbReference type="Proteomes" id="UP000002311">
    <property type="component" value="Chromosome IX"/>
</dbReference>
<dbReference type="RNAct" id="P41277">
    <property type="molecule type" value="protein"/>
</dbReference>
<dbReference type="GO" id="GO:0005737">
    <property type="term" value="C:cytoplasm"/>
    <property type="evidence" value="ECO:0000314"/>
    <property type="project" value="SGD"/>
</dbReference>
<dbReference type="GO" id="GO:0005634">
    <property type="term" value="C:nucleus"/>
    <property type="evidence" value="ECO:0007005"/>
    <property type="project" value="SGD"/>
</dbReference>
<dbReference type="GO" id="GO:0000121">
    <property type="term" value="F:glycerol-1-phosphatase activity"/>
    <property type="evidence" value="ECO:0000314"/>
    <property type="project" value="SGD"/>
</dbReference>
<dbReference type="GO" id="GO:0043136">
    <property type="term" value="F:glycerol-3-phosphatase activity"/>
    <property type="evidence" value="ECO:0007669"/>
    <property type="project" value="RHEA"/>
</dbReference>
<dbReference type="GO" id="GO:0046872">
    <property type="term" value="F:metal ion binding"/>
    <property type="evidence" value="ECO:0007669"/>
    <property type="project" value="UniProtKB-KW"/>
</dbReference>
<dbReference type="GO" id="GO:0006114">
    <property type="term" value="P:glycerol biosynthetic process"/>
    <property type="evidence" value="ECO:0000315"/>
    <property type="project" value="SGD"/>
</dbReference>
<dbReference type="GO" id="GO:0006970">
    <property type="term" value="P:response to osmotic stress"/>
    <property type="evidence" value="ECO:0000318"/>
    <property type="project" value="GO_Central"/>
</dbReference>
<dbReference type="CDD" id="cd07527">
    <property type="entry name" value="HAD_ScGPP-like"/>
    <property type="match status" value="1"/>
</dbReference>
<dbReference type="FunFam" id="1.10.150.240:FF:000012">
    <property type="entry name" value="Glycerol-1-phosphate phosphohydrolase 1"/>
    <property type="match status" value="1"/>
</dbReference>
<dbReference type="FunFam" id="3.40.50.1000:FF:000033">
    <property type="entry name" value="Sugar phosphatase YfbT"/>
    <property type="match status" value="1"/>
</dbReference>
<dbReference type="Gene3D" id="3.40.50.1000">
    <property type="entry name" value="HAD superfamily/HAD-like"/>
    <property type="match status" value="1"/>
</dbReference>
<dbReference type="Gene3D" id="1.10.150.240">
    <property type="entry name" value="Putative phosphatase, domain 2"/>
    <property type="match status" value="1"/>
</dbReference>
<dbReference type="InterPro" id="IPR036412">
    <property type="entry name" value="HAD-like_sf"/>
</dbReference>
<dbReference type="InterPro" id="IPR051806">
    <property type="entry name" value="HAD-like_SPP"/>
</dbReference>
<dbReference type="InterPro" id="IPR006439">
    <property type="entry name" value="HAD-SF_hydro_IA"/>
</dbReference>
<dbReference type="InterPro" id="IPR023214">
    <property type="entry name" value="HAD_sf"/>
</dbReference>
<dbReference type="InterPro" id="IPR023198">
    <property type="entry name" value="PGP-like_dom2"/>
</dbReference>
<dbReference type="NCBIfam" id="TIGR01509">
    <property type="entry name" value="HAD-SF-IA-v3"/>
    <property type="match status" value="1"/>
</dbReference>
<dbReference type="PANTHER" id="PTHR43481">
    <property type="entry name" value="FRUCTOSE-1-PHOSPHATE PHOSPHATASE"/>
    <property type="match status" value="1"/>
</dbReference>
<dbReference type="PANTHER" id="PTHR43481:SF4">
    <property type="entry name" value="GLYCEROL-1-PHOSPHATE PHOSPHOHYDROLASE 1-RELATED"/>
    <property type="match status" value="1"/>
</dbReference>
<dbReference type="Pfam" id="PF00702">
    <property type="entry name" value="Hydrolase"/>
    <property type="match status" value="1"/>
</dbReference>
<dbReference type="SFLD" id="SFLDG01135">
    <property type="entry name" value="C1.5.6:_HAD__Beta-PGM__Phospha"/>
    <property type="match status" value="1"/>
</dbReference>
<dbReference type="SFLD" id="SFLDF00037">
    <property type="entry name" value="glycerol-3-phosphate_phosphata"/>
    <property type="match status" value="1"/>
</dbReference>
<dbReference type="SUPFAM" id="SSF56784">
    <property type="entry name" value="HAD-like"/>
    <property type="match status" value="1"/>
</dbReference>
<reference key="1">
    <citation type="journal article" date="1995" name="Mol. Gen. Genet.">
        <title>Cloning and characterization of seven cDNAs for hyperosmolarity-responsive (HOR) genes of Saccharomyces cerevisiae.</title>
        <authorList>
            <person name="Hirayama T."/>
            <person name="Maeda T."/>
            <person name="Saito H."/>
            <person name="Shinozaki K."/>
        </authorList>
    </citation>
    <scope>NUCLEOTIDE SEQUENCE [MRNA]</scope>
    <source>
        <strain>RS16</strain>
    </source>
</reference>
<reference key="2">
    <citation type="journal article" date="1997" name="Nature">
        <title>The nucleotide sequence of Saccharomyces cerevisiae chromosome IX.</title>
        <authorList>
            <person name="Churcher C.M."/>
            <person name="Bowman S."/>
            <person name="Badcock K."/>
            <person name="Bankier A.T."/>
            <person name="Brown D."/>
            <person name="Chillingworth T."/>
            <person name="Connor R."/>
            <person name="Devlin K."/>
            <person name="Gentles S."/>
            <person name="Hamlin N."/>
            <person name="Harris D.E."/>
            <person name="Horsnell T."/>
            <person name="Hunt S."/>
            <person name="Jagels K."/>
            <person name="Jones M."/>
            <person name="Lye G."/>
            <person name="Moule S."/>
            <person name="Odell C."/>
            <person name="Pearson D."/>
            <person name="Rajandream M.A."/>
            <person name="Rice P."/>
            <person name="Rowley N."/>
            <person name="Skelton J."/>
            <person name="Smith V."/>
            <person name="Walsh S.V."/>
            <person name="Whitehead S."/>
            <person name="Barrell B.G."/>
        </authorList>
    </citation>
    <scope>NUCLEOTIDE SEQUENCE [LARGE SCALE GENOMIC DNA]</scope>
    <source>
        <strain>ATCC 204508 / S288c</strain>
    </source>
</reference>
<reference key="3">
    <citation type="journal article" date="2014" name="G3 (Bethesda)">
        <title>The reference genome sequence of Saccharomyces cerevisiae: Then and now.</title>
        <authorList>
            <person name="Engel S.R."/>
            <person name="Dietrich F.S."/>
            <person name="Fisk D.G."/>
            <person name="Binkley G."/>
            <person name="Balakrishnan R."/>
            <person name="Costanzo M.C."/>
            <person name="Dwight S.S."/>
            <person name="Hitz B.C."/>
            <person name="Karra K."/>
            <person name="Nash R.S."/>
            <person name="Weng S."/>
            <person name="Wong E.D."/>
            <person name="Lloyd P."/>
            <person name="Skrzypek M.S."/>
            <person name="Miyasato S.R."/>
            <person name="Simison M."/>
            <person name="Cherry J.M."/>
        </authorList>
    </citation>
    <scope>GENOME REANNOTATION</scope>
    <source>
        <strain>ATCC 204508 / S288c</strain>
    </source>
</reference>
<reference key="4">
    <citation type="journal article" date="1994" name="Electrophoresis">
        <title>Protein identifications for a Saccharomyces cerevisiae protein database.</title>
        <authorList>
            <person name="Garrels J.I."/>
            <person name="Futcher B."/>
            <person name="Kobayashi R."/>
            <person name="Latter G.I."/>
            <person name="Schwender B."/>
            <person name="Volpe T."/>
            <person name="Warner J.R."/>
            <person name="McLaughlin C.S."/>
        </authorList>
    </citation>
    <scope>PROTEIN SEQUENCE OF 86-97 AND 173-188</scope>
    <source>
        <strain>ATCC 204508 / S288c</strain>
    </source>
</reference>
<reference key="5">
    <citation type="journal article" date="1996" name="J. Biol. Chem.">
        <title>Purification and characterization of two isoenzymes of DL-glycerol-3-phosphatase from Saccharomyces cerevisiae. Identification of the corresponding GPP1 and GPP2 genes and evidence for osmotic regulation of Gpp2p expression by the osmosensing mitogen-activated protein kinase signal transduction pathway.</title>
        <authorList>
            <person name="Norbeck J."/>
            <person name="Paehlman A.-K."/>
            <person name="Akhtar N."/>
            <person name="Blomberg A."/>
            <person name="Adler L."/>
        </authorList>
    </citation>
    <scope>PARTIAL PROTEIN SEQUENCE</scope>
    <scope>FUNCTION</scope>
    <scope>CATALYTIC ACTIVITY</scope>
    <scope>BIOPHYSICOCHEMICAL PROPERTIES</scope>
    <scope>SUBUNIT</scope>
</reference>
<reference key="6">
    <citation type="journal article" date="1997" name="J. Biol. Chem.">
        <title>Metabolic and regulatory changes associated with growth of Saccharomyces cerevisiae in 1.4 M NaCl. Evidence for osmotic induction of glycerol dissimilation via the dihydroxyacetone pathway.</title>
        <authorList>
            <person name="Norbeck J."/>
            <person name="Blomberg A."/>
        </authorList>
    </citation>
    <scope>PROTEIN SEQUENCE OF 2-8</scope>
    <source>
        <strain>ATCC 44827 / SKQ2N</strain>
    </source>
</reference>
<reference key="7">
    <citation type="journal article" date="1997" name="Electrophoresis">
        <title>Identification of two-dimensional gel electrophoresis resolved yeast proteins by matrix-assisted laser desorption ionization mass spectrometry.</title>
        <authorList>
            <person name="Larsson T."/>
            <person name="Norbeck J."/>
            <person name="Karlsson H."/>
            <person name="Karlsson K.-A."/>
            <person name="Blomberg A."/>
        </authorList>
    </citation>
    <scope>IDENTIFICATION BY MASS SPECTROMETRY</scope>
</reference>
<reference key="8">
    <citation type="journal article" date="2000" name="Mol. Microbiol.">
        <title>The control of intracellular glycerol in Saccharomyces cerevisiae influences osmotic stress response and resistance to increased temperature.</title>
        <authorList>
            <person name="Siderius M."/>
            <person name="Van Wuytswinkel O."/>
            <person name="Reijenga K.A."/>
            <person name="Kelders M."/>
            <person name="Mager W.H."/>
        </authorList>
    </citation>
    <scope>DISRUPTION PHENOTYPE</scope>
</reference>
<reference key="9">
    <citation type="journal article" date="2000" name="Yeast">
        <title>Microaerobic glycerol formation in Saccharomyces cerevisiae.</title>
        <authorList>
            <person name="Costenoble R."/>
            <person name="Valadi H."/>
            <person name="Gustafsson L."/>
            <person name="Niklasson C."/>
            <person name="Franzen C.J."/>
        </authorList>
    </citation>
    <scope>INDUCTION</scope>
</reference>
<reference key="10">
    <citation type="journal article" date="2001" name="J. Biol. Chem.">
        <title>The yeast glycerol 3-phosphatases Gpp1p and Gpp2p are required for glycerol biosynthesis and differentially involved in the cellular responses to osmotic, anaerobic, and oxidative stress.</title>
        <authorList>
            <person name="Pahlman A.K."/>
            <person name="Granath K."/>
            <person name="Ansell R."/>
            <person name="Hohmann S."/>
            <person name="Adler L."/>
        </authorList>
    </citation>
    <scope>FUNCTION</scope>
    <scope>INDUCTION</scope>
</reference>
<reference key="11">
    <citation type="journal article" date="2003" name="Nature">
        <title>Global analysis of protein localization in budding yeast.</title>
        <authorList>
            <person name="Huh W.-K."/>
            <person name="Falvo J.V."/>
            <person name="Gerke L.C."/>
            <person name="Carroll A.S."/>
            <person name="Howson R.W."/>
            <person name="Weissman J.S."/>
            <person name="O'Shea E.K."/>
        </authorList>
    </citation>
    <scope>SUBCELLULAR LOCATION [LARGE SCALE ANALYSIS]</scope>
</reference>
<reference key="12">
    <citation type="journal article" date="2003" name="Nature">
        <title>Global analysis of protein expression in yeast.</title>
        <authorList>
            <person name="Ghaemmaghami S."/>
            <person name="Huh W.-K."/>
            <person name="Bower K."/>
            <person name="Howson R.W."/>
            <person name="Belle A."/>
            <person name="Dephoure N."/>
            <person name="O'Shea E.K."/>
            <person name="Weissman J.S."/>
        </authorList>
    </citation>
    <scope>LEVEL OF PROTEIN EXPRESSION [LARGE SCALE ANALYSIS]</scope>
</reference>
<reference key="13">
    <citation type="journal article" date="2004" name="Appl. Environ. Microbiol.">
        <title>Molecular basis for anaerobic growth of Saccharomyces cerevisiae on xylose, investigated by global gene expression and metabolic flux analysis.</title>
        <authorList>
            <person name="Sonderegger M."/>
            <person name="Jeppsson M."/>
            <person name="Hahn-Hagerdal B."/>
            <person name="Sauer U."/>
        </authorList>
    </citation>
    <scope>INDUCTION</scope>
</reference>
<reference key="14">
    <citation type="journal article" date="2004" name="J. Biol. Chem.">
        <title>Global analyses of sumoylated proteins in Saccharomyces cerevisiae. Induction of protein sumoylation by cellular stresses.</title>
        <authorList>
            <person name="Zhou W."/>
            <person name="Ryan J.J."/>
            <person name="Zhou H."/>
        </authorList>
    </citation>
    <scope>SUMOYLATION [LARGE SCALE ANALYSIS] AT LYS-64</scope>
    <scope>IDENTIFICATION BY MASS SPECTROMETRY</scope>
</reference>
<reference key="15">
    <citation type="journal article" date="2004" name="Metab. Eng.">
        <title>Engineering of Saccharomyces cerevisiae for the production of L-glycerol 3-phosphate.</title>
        <authorList>
            <person name="Nguyen H.T."/>
            <person name="Dieterich A."/>
            <person name="Athenstaedt K."/>
            <person name="Truong N.H."/>
            <person name="Stahl U."/>
            <person name="Nevoigt E."/>
        </authorList>
    </citation>
    <scope>FUNCTION</scope>
</reference>
<reference key="16">
    <citation type="journal article" date="2005" name="Yeast">
        <title>The YIG1 (YPL201c) encoded protein is involved in regulating anaerobic glycerol metabolism in Saccharomyces cerevisiae.</title>
        <authorList>
            <person name="Granath K."/>
            <person name="Modig T."/>
            <person name="Forsmark A."/>
            <person name="Adler L."/>
            <person name="Liden G."/>
        </authorList>
    </citation>
    <scope>FUNCTION</scope>
    <scope>INDUCTION</scope>
</reference>
<reference key="17">
    <citation type="journal article" date="2007" name="Proc. Natl. Acad. Sci. U.S.A.">
        <title>Analysis of phosphorylation sites on proteins from Saccharomyces cerevisiae by electron transfer dissociation (ETD) mass spectrometry.</title>
        <authorList>
            <person name="Chi A."/>
            <person name="Huttenhower C."/>
            <person name="Geer L.Y."/>
            <person name="Coon J.J."/>
            <person name="Syka J.E.P."/>
            <person name="Bai D.L."/>
            <person name="Shabanowitz J."/>
            <person name="Burke D.J."/>
            <person name="Troyanskaya O.G."/>
            <person name="Hunt D.F."/>
        </authorList>
    </citation>
    <scope>IDENTIFICATION BY MASS SPECTROMETRY [LARGE SCALE ANALYSIS]</scope>
</reference>
<reference key="18">
    <citation type="journal article" date="2008" name="Biotechnol. Bioeng.">
        <title>Fermentative production of L-glycerol 3-phosphate utilizing a Saccharomyces cerevisiae strain with an engineered glycerol biosynthetic pathway.</title>
        <authorList>
            <person name="Popp A."/>
            <person name="Nguyen H.T."/>
            <person name="Boulahya K."/>
            <person name="Bideaux C."/>
            <person name="Alfenore S."/>
            <person name="Guillouet S.E."/>
            <person name="Nevoigt E."/>
        </authorList>
    </citation>
    <scope>FUNCTION</scope>
</reference>
<reference key="19">
    <citation type="journal article" date="2008" name="FEMS Yeast Res.">
        <title>Central carbon metabolism of Saccharomyces cerevisiae in anaerobic, oxygen-limited and fully aerobic steady-state conditions and following a shift to anaerobic conditions.</title>
        <authorList>
            <person name="Wiebe M.G."/>
            <person name="Rintala E."/>
            <person name="Tamminen A."/>
            <person name="Simolin H."/>
            <person name="Salusjarvi L."/>
            <person name="Toivari M."/>
            <person name="Kokkonen J.T."/>
            <person name="Kiuru J."/>
            <person name="Ketola R.A."/>
            <person name="Jouhten P."/>
            <person name="Huuskonen A."/>
            <person name="Maaheimo H."/>
            <person name="Ruohonen L."/>
            <person name="Penttila M."/>
        </authorList>
    </citation>
    <scope>INDUCTION</scope>
</reference>
<reference key="20">
    <citation type="journal article" date="2009" name="Science">
        <title>Global analysis of Cdk1 substrate phosphorylation sites provides insights into evolution.</title>
        <authorList>
            <person name="Holt L.J."/>
            <person name="Tuch B.B."/>
            <person name="Villen J."/>
            <person name="Johnson A.D."/>
            <person name="Gygi S.P."/>
            <person name="Morgan D.O."/>
        </authorList>
    </citation>
    <scope>PHOSPHORYLATION [LARGE SCALE ANALYSIS] AT SER-90</scope>
    <scope>IDENTIFICATION BY MASS SPECTROMETRY [LARGE SCALE ANALYSIS]</scope>
</reference>
<reference key="21">
    <citation type="journal article" date="2011" name="Yeast">
        <title>Metabolic regulation rather than de novo enzyme synthesis dominates the osmo-adaptation of yeast.</title>
        <authorList>
            <person name="Bouwman J."/>
            <person name="Kiewiet J."/>
            <person name="Lindenbergh A."/>
            <person name="van Eunen K."/>
            <person name="Siderius M."/>
            <person name="Bakker B.M."/>
        </authorList>
    </citation>
    <scope>INDUCTION</scope>
</reference>
<reference key="22">
    <citation type="journal article" date="2012" name="Proteomics">
        <title>Sites of ubiquitin attachment in Saccharomyces cerevisiae.</title>
        <authorList>
            <person name="Starita L.M."/>
            <person name="Lo R.S."/>
            <person name="Eng J.K."/>
            <person name="von Haller P.D."/>
            <person name="Fields S."/>
        </authorList>
    </citation>
    <scope>UBIQUITINATION [LARGE SCALE ANALYSIS] AT LYS-64 AND LYS-144</scope>
    <scope>IDENTIFICATION BY MASS SPECTROMETRY [LARGE SCALE ANALYSIS]</scope>
</reference>
<reference key="23">
    <citation type="submission" date="2009-02" db="PDB data bank">
        <title>The crystal structure of an isoform of DL-glycerol-3-phosphatase, Rhr2p from Saccharomyces cerevisiae.</title>
        <authorList>
            <consortium name="Midwest center for structural genomics (MCSG)"/>
        </authorList>
    </citation>
    <scope>X-RAY CRYSTALLOGRAPHY (1.6 ANGSTROMS)</scope>
</reference>
<gene>
    <name evidence="17" type="primary">GPP1</name>
    <name evidence="16" type="synonym">RHR2</name>
    <name evidence="20" type="ordered locus">YIL053W</name>
</gene>
<evidence type="ECO:0000250" key="1"/>
<evidence type="ECO:0000269" key="2">
    <source>
    </source>
</evidence>
<evidence type="ECO:0000269" key="3">
    <source>
    </source>
</evidence>
<evidence type="ECO:0000269" key="4">
    <source>
    </source>
</evidence>
<evidence type="ECO:0000269" key="5">
    <source>
    </source>
</evidence>
<evidence type="ECO:0000269" key="6">
    <source>
    </source>
</evidence>
<evidence type="ECO:0000269" key="7">
    <source>
    </source>
</evidence>
<evidence type="ECO:0000269" key="8">
    <source>
    </source>
</evidence>
<evidence type="ECO:0000269" key="9">
    <source>
    </source>
</evidence>
<evidence type="ECO:0000269" key="10">
    <source>
    </source>
</evidence>
<evidence type="ECO:0000269" key="11">
    <source>
    </source>
</evidence>
<evidence type="ECO:0000269" key="12">
    <source>
    </source>
</evidence>
<evidence type="ECO:0000269" key="13">
    <source>
    </source>
</evidence>
<evidence type="ECO:0000269" key="14">
    <source>
    </source>
</evidence>
<evidence type="ECO:0000269" key="15">
    <source>
    </source>
</evidence>
<evidence type="ECO:0000303" key="16">
    <source>
    </source>
</evidence>
<evidence type="ECO:0000303" key="17">
    <source>
    </source>
</evidence>
<evidence type="ECO:0000305" key="18"/>
<evidence type="ECO:0000305" key="19">
    <source>
    </source>
</evidence>
<evidence type="ECO:0000312" key="20">
    <source>
        <dbReference type="SGD" id="S000001315"/>
    </source>
</evidence>
<evidence type="ECO:0007744" key="21">
    <source>
    </source>
</evidence>
<evidence type="ECO:0007744" key="22">
    <source>
    </source>
</evidence>
<evidence type="ECO:0007829" key="23">
    <source>
        <dbReference type="PDB" id="2QLT"/>
    </source>
</evidence>
<proteinExistence type="evidence at protein level"/>
<protein>
    <recommendedName>
        <fullName evidence="18">Glycerol-1-phosphate phosphohydrolase 1</fullName>
        <ecNumber evidence="14">3.1.3.21</ecNumber>
    </recommendedName>
    <alternativeName>
        <fullName evidence="17">(DL)-glycerol-3-phosphatase 1</fullName>
    </alternativeName>
    <alternativeName>
        <fullName evidence="16">Related to HOR2 protein 2</fullName>
    </alternativeName>
</protein>
<name>GPP1_YEAST</name>
<comment type="function">
    <text evidence="3 8 10 12 14">Major isoform of glycerol-1-phosphate phosphohydrolase involved in glycerol biosynthesis. Plays a role in osmoadaptation and required for adaptation to anaerobic conditions.</text>
</comment>
<comment type="catalytic activity">
    <reaction evidence="14">
        <text>sn-glycerol 1-phosphate + H2O = glycerol + phosphate</text>
        <dbReference type="Rhea" id="RHEA:46084"/>
        <dbReference type="ChEBI" id="CHEBI:15377"/>
        <dbReference type="ChEBI" id="CHEBI:17754"/>
        <dbReference type="ChEBI" id="CHEBI:43474"/>
        <dbReference type="ChEBI" id="CHEBI:57685"/>
        <dbReference type="EC" id="3.1.3.21"/>
    </reaction>
</comment>
<comment type="catalytic activity">
    <reaction evidence="14">
        <text>sn-glycerol 3-phosphate + H2O = glycerol + phosphate</text>
        <dbReference type="Rhea" id="RHEA:66372"/>
        <dbReference type="ChEBI" id="CHEBI:15377"/>
        <dbReference type="ChEBI" id="CHEBI:17754"/>
        <dbReference type="ChEBI" id="CHEBI:43474"/>
        <dbReference type="ChEBI" id="CHEBI:57597"/>
        <dbReference type="EC" id="3.1.3.21"/>
    </reaction>
</comment>
<comment type="cofactor">
    <cofactor evidence="19">
        <name>Mg(2+)</name>
        <dbReference type="ChEBI" id="CHEBI:18420"/>
    </cofactor>
</comment>
<comment type="biophysicochemical properties">
    <kinetics>
        <KM evidence="14">3.1 mM for (DL)-glycerol 3-phosphate</KM>
        <Vmax evidence="14">49.0 umol/min/mg enzyme</Vmax>
    </kinetics>
    <phDependence>
        <text evidence="14">Optimum pH is 6.5.</text>
    </phDependence>
</comment>
<comment type="subunit">
    <text evidence="14">Monomer.</text>
</comment>
<comment type="subcellular location">
    <subcellularLocation>
        <location evidence="5">Cytoplasm</location>
    </subcellularLocation>
    <subcellularLocation>
        <location evidence="5">Nucleus</location>
    </subcellularLocation>
</comment>
<comment type="induction">
    <text evidence="3 4 7 10 11 13">In response to both anaerobic and osmotic stress. Expression seems to be under the control of YIG1.</text>
</comment>
<comment type="disruption phenotype">
    <text evidence="2">Leads to osmosensitivity.</text>
</comment>
<comment type="miscellaneous">
    <text evidence="6">Present with 193000 molecules/cell in log phase SD medium.</text>
</comment>
<comment type="similarity">
    <text evidence="18">Belongs to the HAD-like hydrolase superfamily. DOG/GPP family.</text>
</comment>
<comment type="sequence caution" evidence="18">
    <conflict type="erroneous initiation">
        <sequence resource="EMBL-CDS" id="CAA86169"/>
    </conflict>
    <text>Extended N-terminus.</text>
</comment>
<organism>
    <name type="scientific">Saccharomyces cerevisiae (strain ATCC 204508 / S288c)</name>
    <name type="common">Baker's yeast</name>
    <dbReference type="NCBI Taxonomy" id="559292"/>
    <lineage>
        <taxon>Eukaryota</taxon>
        <taxon>Fungi</taxon>
        <taxon>Dikarya</taxon>
        <taxon>Ascomycota</taxon>
        <taxon>Saccharomycotina</taxon>
        <taxon>Saccharomycetes</taxon>
        <taxon>Saccharomycetales</taxon>
        <taxon>Saccharomycetaceae</taxon>
        <taxon>Saccharomyces</taxon>
    </lineage>
</organism>
<sequence length="250" mass="27947">MPLTTKPLSLKINAALFDVDGTIIISQPAIAAFWRDFGKDKPYFDAEHVIHISHGWRTYDAIAKFAPDFADEEYVNKLEGEIPEKYGEHSIEVPGAVKLCNALNALPKEKWAVATSGTRDMAKKWFDILKIKRPEYFITANDVKQGKPHPEPYLKGRNGLGFPINEQDPSKSKVVVFEDAPAGIAAGKAAGCKIVGIATTFDLDFLKEKGCDIIVKNHESIRVGEYNAETDEVELIFDDYLYAKDDLLKW</sequence>
<accession>P41277</accession>
<accession>D6VVM8</accession>
<accession>P38012</accession>
<keyword id="KW-0002">3D-structure</keyword>
<keyword id="KW-0963">Cytoplasm</keyword>
<keyword id="KW-0903">Direct protein sequencing</keyword>
<keyword id="KW-0378">Hydrolase</keyword>
<keyword id="KW-1017">Isopeptide bond</keyword>
<keyword id="KW-0460">Magnesium</keyword>
<keyword id="KW-0479">Metal-binding</keyword>
<keyword id="KW-0539">Nucleus</keyword>
<keyword id="KW-0597">Phosphoprotein</keyword>
<keyword id="KW-1185">Reference proteome</keyword>
<keyword id="KW-0832">Ubl conjugation</keyword>